<name>FES1_SCHPO</name>
<proteinExistence type="evidence at protein level"/>
<feature type="chain" id="PRO_0000285401" description="Hsp70 nucleotide exchange factor fes1">
    <location>
        <begin position="1"/>
        <end position="287"/>
    </location>
</feature>
<feature type="repeat" description="ARM 1">
    <location>
        <begin position="75"/>
        <end position="114"/>
    </location>
</feature>
<feature type="repeat" description="ARM 2">
    <location>
        <begin position="117"/>
        <end position="157"/>
    </location>
</feature>
<feature type="repeat" description="ARM 3">
    <location>
        <begin position="160"/>
        <end position="200"/>
    </location>
</feature>
<feature type="region of interest" description="Disordered" evidence="2">
    <location>
        <begin position="1"/>
        <end position="30"/>
    </location>
</feature>
<feature type="compositionally biased region" description="Polar residues" evidence="2">
    <location>
        <begin position="7"/>
        <end position="20"/>
    </location>
</feature>
<feature type="modified residue" description="Phosphoserine" evidence="4">
    <location>
        <position position="18"/>
    </location>
</feature>
<feature type="modified residue" description="Phosphoserine" evidence="4">
    <location>
        <position position="20"/>
    </location>
</feature>
<organism>
    <name type="scientific">Schizosaccharomyces pombe (strain 972 / ATCC 24843)</name>
    <name type="common">Fission yeast</name>
    <dbReference type="NCBI Taxonomy" id="284812"/>
    <lineage>
        <taxon>Eukaryota</taxon>
        <taxon>Fungi</taxon>
        <taxon>Dikarya</taxon>
        <taxon>Ascomycota</taxon>
        <taxon>Taphrinomycotina</taxon>
        <taxon>Schizosaccharomycetes</taxon>
        <taxon>Schizosaccharomycetales</taxon>
        <taxon>Schizosaccharomycetaceae</taxon>
        <taxon>Schizosaccharomyces</taxon>
    </lineage>
</organism>
<evidence type="ECO:0000250" key="1"/>
<evidence type="ECO:0000256" key="2">
    <source>
        <dbReference type="SAM" id="MobiDB-lite"/>
    </source>
</evidence>
<evidence type="ECO:0000269" key="3">
    <source>
    </source>
</evidence>
<evidence type="ECO:0000269" key="4">
    <source>
    </source>
</evidence>
<evidence type="ECO:0000305" key="5"/>
<comment type="function">
    <text evidence="1">Functions as a nucleotide exchange factor (NEF) for Hsp70 chaperones which accelerates the release of ADP. Required for fully efficient Hsp70-mediated folding of proteins (By similarity).</text>
</comment>
<comment type="subcellular location">
    <subcellularLocation>
        <location evidence="3">Cytoplasm</location>
    </subcellularLocation>
    <subcellularLocation>
        <location evidence="3">Nucleus</location>
    </subcellularLocation>
</comment>
<comment type="similarity">
    <text evidence="5">Belongs to the FES1 family.</text>
</comment>
<sequence length="287" mass="32745">MEKLLAFSTQLQAQGNSSNSPPDPKDLDPSVLDHIFGANPADEMRKAMDAIEDPSVPLDQKEIAFDNLEMLVEHIDNANNLVPLQLWPRLLKQLESPESTLRRLAAWTIATAVQNNPKSQQALIENDGLKILFGALKKEDSDETKNKVLYAITSELKLNEAGIALLDKIPNSWEMLIEILELKHSVMTKRVIFFFYALLIQEDKSKQIILQKAHEFQIPEKVYQFSLEHSVDEDCVTKSLHTLYLFQKNKVSVANTNELLKSLVQFKSEFPEIFTVDEWKAFHEALE</sequence>
<keyword id="KW-0963">Cytoplasm</keyword>
<keyword id="KW-0539">Nucleus</keyword>
<keyword id="KW-0597">Phosphoprotein</keyword>
<keyword id="KW-1185">Reference proteome</keyword>
<keyword id="KW-0677">Repeat</keyword>
<keyword id="KW-0810">Translation regulation</keyword>
<accession>O43030</accession>
<reference key="1">
    <citation type="journal article" date="2002" name="Nature">
        <title>The genome sequence of Schizosaccharomyces pombe.</title>
        <authorList>
            <person name="Wood V."/>
            <person name="Gwilliam R."/>
            <person name="Rajandream M.A."/>
            <person name="Lyne M.H."/>
            <person name="Lyne R."/>
            <person name="Stewart A."/>
            <person name="Sgouros J.G."/>
            <person name="Peat N."/>
            <person name="Hayles J."/>
            <person name="Baker S.G."/>
            <person name="Basham D."/>
            <person name="Bowman S."/>
            <person name="Brooks K."/>
            <person name="Brown D."/>
            <person name="Brown S."/>
            <person name="Chillingworth T."/>
            <person name="Churcher C.M."/>
            <person name="Collins M."/>
            <person name="Connor R."/>
            <person name="Cronin A."/>
            <person name="Davis P."/>
            <person name="Feltwell T."/>
            <person name="Fraser A."/>
            <person name="Gentles S."/>
            <person name="Goble A."/>
            <person name="Hamlin N."/>
            <person name="Harris D.E."/>
            <person name="Hidalgo J."/>
            <person name="Hodgson G."/>
            <person name="Holroyd S."/>
            <person name="Hornsby T."/>
            <person name="Howarth S."/>
            <person name="Huckle E.J."/>
            <person name="Hunt S."/>
            <person name="Jagels K."/>
            <person name="James K.D."/>
            <person name="Jones L."/>
            <person name="Jones M."/>
            <person name="Leather S."/>
            <person name="McDonald S."/>
            <person name="McLean J."/>
            <person name="Mooney P."/>
            <person name="Moule S."/>
            <person name="Mungall K.L."/>
            <person name="Murphy L.D."/>
            <person name="Niblett D."/>
            <person name="Odell C."/>
            <person name="Oliver K."/>
            <person name="O'Neil S."/>
            <person name="Pearson D."/>
            <person name="Quail M.A."/>
            <person name="Rabbinowitsch E."/>
            <person name="Rutherford K.M."/>
            <person name="Rutter S."/>
            <person name="Saunders D."/>
            <person name="Seeger K."/>
            <person name="Sharp S."/>
            <person name="Skelton J."/>
            <person name="Simmonds M.N."/>
            <person name="Squares R."/>
            <person name="Squares S."/>
            <person name="Stevens K."/>
            <person name="Taylor K."/>
            <person name="Taylor R.G."/>
            <person name="Tivey A."/>
            <person name="Walsh S.V."/>
            <person name="Warren T."/>
            <person name="Whitehead S."/>
            <person name="Woodward J.R."/>
            <person name="Volckaert G."/>
            <person name="Aert R."/>
            <person name="Robben J."/>
            <person name="Grymonprez B."/>
            <person name="Weltjens I."/>
            <person name="Vanstreels E."/>
            <person name="Rieger M."/>
            <person name="Schaefer M."/>
            <person name="Mueller-Auer S."/>
            <person name="Gabel C."/>
            <person name="Fuchs M."/>
            <person name="Duesterhoeft A."/>
            <person name="Fritzc C."/>
            <person name="Holzer E."/>
            <person name="Moestl D."/>
            <person name="Hilbert H."/>
            <person name="Borzym K."/>
            <person name="Langer I."/>
            <person name="Beck A."/>
            <person name="Lehrach H."/>
            <person name="Reinhardt R."/>
            <person name="Pohl T.M."/>
            <person name="Eger P."/>
            <person name="Zimmermann W."/>
            <person name="Wedler H."/>
            <person name="Wambutt R."/>
            <person name="Purnelle B."/>
            <person name="Goffeau A."/>
            <person name="Cadieu E."/>
            <person name="Dreano S."/>
            <person name="Gloux S."/>
            <person name="Lelaure V."/>
            <person name="Mottier S."/>
            <person name="Galibert F."/>
            <person name="Aves S.J."/>
            <person name="Xiang Z."/>
            <person name="Hunt C."/>
            <person name="Moore K."/>
            <person name="Hurst S.M."/>
            <person name="Lucas M."/>
            <person name="Rochet M."/>
            <person name="Gaillardin C."/>
            <person name="Tallada V.A."/>
            <person name="Garzon A."/>
            <person name="Thode G."/>
            <person name="Daga R.R."/>
            <person name="Cruzado L."/>
            <person name="Jimenez J."/>
            <person name="Sanchez M."/>
            <person name="del Rey F."/>
            <person name="Benito J."/>
            <person name="Dominguez A."/>
            <person name="Revuelta J.L."/>
            <person name="Moreno S."/>
            <person name="Armstrong J."/>
            <person name="Forsburg S.L."/>
            <person name="Cerutti L."/>
            <person name="Lowe T."/>
            <person name="McCombie W.R."/>
            <person name="Paulsen I."/>
            <person name="Potashkin J."/>
            <person name="Shpakovski G.V."/>
            <person name="Ussery D."/>
            <person name="Barrell B.G."/>
            <person name="Nurse P."/>
        </authorList>
    </citation>
    <scope>NUCLEOTIDE SEQUENCE [LARGE SCALE GENOMIC DNA]</scope>
    <source>
        <strain>972 / ATCC 24843</strain>
    </source>
</reference>
<reference key="2">
    <citation type="journal article" date="2006" name="Nat. Biotechnol.">
        <title>ORFeome cloning and global analysis of protein localization in the fission yeast Schizosaccharomyces pombe.</title>
        <authorList>
            <person name="Matsuyama A."/>
            <person name="Arai R."/>
            <person name="Yashiroda Y."/>
            <person name="Shirai A."/>
            <person name="Kamata A."/>
            <person name="Sekido S."/>
            <person name="Kobayashi Y."/>
            <person name="Hashimoto A."/>
            <person name="Hamamoto M."/>
            <person name="Hiraoka Y."/>
            <person name="Horinouchi S."/>
            <person name="Yoshida M."/>
        </authorList>
    </citation>
    <scope>SUBCELLULAR LOCATION [LARGE SCALE ANALYSIS]</scope>
</reference>
<reference key="3">
    <citation type="journal article" date="2008" name="J. Proteome Res.">
        <title>Phosphoproteome analysis of fission yeast.</title>
        <authorList>
            <person name="Wilson-Grady J.T."/>
            <person name="Villen J."/>
            <person name="Gygi S.P."/>
        </authorList>
    </citation>
    <scope>PHOSPHORYLATION [LARGE SCALE ANALYSIS] AT SER-18 AND SER-20</scope>
    <scope>IDENTIFICATION BY MASS SPECTROMETRY</scope>
</reference>
<gene>
    <name type="primary">fes1</name>
    <name type="ORF">SPBC3B9.01</name>
</gene>
<protein>
    <recommendedName>
        <fullName>Hsp70 nucleotide exchange factor fes1</fullName>
    </recommendedName>
</protein>
<dbReference type="EMBL" id="CU329671">
    <property type="protein sequence ID" value="CAA17781.1"/>
    <property type="molecule type" value="Genomic_DNA"/>
</dbReference>
<dbReference type="PIR" id="T40340">
    <property type="entry name" value="T40340"/>
</dbReference>
<dbReference type="RefSeq" id="NP_596658.1">
    <property type="nucleotide sequence ID" value="NM_001022580.2"/>
</dbReference>
<dbReference type="SMR" id="O43030"/>
<dbReference type="BioGRID" id="276819">
    <property type="interactions" value="4"/>
</dbReference>
<dbReference type="FunCoup" id="O43030">
    <property type="interactions" value="383"/>
</dbReference>
<dbReference type="IntAct" id="O43030">
    <property type="interactions" value="2"/>
</dbReference>
<dbReference type="MINT" id="O43030"/>
<dbReference type="STRING" id="284812.O43030"/>
<dbReference type="iPTMnet" id="O43030"/>
<dbReference type="PaxDb" id="4896-SPBC3B9.01.1"/>
<dbReference type="EnsemblFungi" id="SPBC3B9.01.1">
    <property type="protein sequence ID" value="SPBC3B9.01.1:pep"/>
    <property type="gene ID" value="SPBC3B9.01"/>
</dbReference>
<dbReference type="GeneID" id="2540288"/>
<dbReference type="KEGG" id="spo:2540288"/>
<dbReference type="PomBase" id="SPBC3B9.01">
    <property type="gene designation" value="fes1"/>
</dbReference>
<dbReference type="VEuPathDB" id="FungiDB:SPBC3B9.01"/>
<dbReference type="eggNOG" id="KOG2160">
    <property type="taxonomic scope" value="Eukaryota"/>
</dbReference>
<dbReference type="HOGENOM" id="CLU_046722_1_0_1"/>
<dbReference type="InParanoid" id="O43030"/>
<dbReference type="OMA" id="LHWSIAN"/>
<dbReference type="PhylomeDB" id="O43030"/>
<dbReference type="PRO" id="PR:O43030"/>
<dbReference type="Proteomes" id="UP000002485">
    <property type="component" value="Chromosome II"/>
</dbReference>
<dbReference type="GO" id="GO:0005829">
    <property type="term" value="C:cytosol"/>
    <property type="evidence" value="ECO:0007005"/>
    <property type="project" value="PomBase"/>
</dbReference>
<dbReference type="GO" id="GO:0005783">
    <property type="term" value="C:endoplasmic reticulum"/>
    <property type="evidence" value="ECO:0000318"/>
    <property type="project" value="GO_Central"/>
</dbReference>
<dbReference type="GO" id="GO:0005634">
    <property type="term" value="C:nucleus"/>
    <property type="evidence" value="ECO:0007005"/>
    <property type="project" value="PomBase"/>
</dbReference>
<dbReference type="GO" id="GO:0000774">
    <property type="term" value="F:adenyl-nucleotide exchange factor activity"/>
    <property type="evidence" value="ECO:0000318"/>
    <property type="project" value="GO_Central"/>
</dbReference>
<dbReference type="GO" id="GO:0071629">
    <property type="term" value="P:cytoplasm protein quality control by the ubiquitin-proteasome system"/>
    <property type="evidence" value="ECO:0000266"/>
    <property type="project" value="PomBase"/>
</dbReference>
<dbReference type="GO" id="GO:0006417">
    <property type="term" value="P:regulation of translation"/>
    <property type="evidence" value="ECO:0007669"/>
    <property type="project" value="UniProtKB-KW"/>
</dbReference>
<dbReference type="Gene3D" id="1.25.10.10">
    <property type="entry name" value="Leucine-rich Repeat Variant"/>
    <property type="match status" value="1"/>
</dbReference>
<dbReference type="InterPro" id="IPR011989">
    <property type="entry name" value="ARM-like"/>
</dbReference>
<dbReference type="InterPro" id="IPR016024">
    <property type="entry name" value="ARM-type_fold"/>
</dbReference>
<dbReference type="InterPro" id="IPR050693">
    <property type="entry name" value="Hsp70_NEF-Inhibitors"/>
</dbReference>
<dbReference type="InterPro" id="IPR013918">
    <property type="entry name" value="Nucleotide_exch_fac_Fes1"/>
</dbReference>
<dbReference type="PANTHER" id="PTHR19316:SF18">
    <property type="entry name" value="HSP70-BINDING PROTEIN 1"/>
    <property type="match status" value="1"/>
</dbReference>
<dbReference type="PANTHER" id="PTHR19316">
    <property type="entry name" value="PROTEIN FOLDING REGULATOR"/>
    <property type="match status" value="1"/>
</dbReference>
<dbReference type="Pfam" id="PF08609">
    <property type="entry name" value="Fes1"/>
    <property type="match status" value="1"/>
</dbReference>
<dbReference type="SUPFAM" id="SSF48371">
    <property type="entry name" value="ARM repeat"/>
    <property type="match status" value="1"/>
</dbReference>